<protein>
    <recommendedName>
        <fullName>Centrosomal protein of 97 kDa</fullName>
        <shortName>Cep97</shortName>
    </recommendedName>
    <alternativeName>
        <fullName>Leucine-rich repeat and IQ domain-containing protein 2</fullName>
    </alternativeName>
</protein>
<keyword id="KW-0025">Alternative splicing</keyword>
<keyword id="KW-0970">Cilium biogenesis/degradation</keyword>
<keyword id="KW-0963">Cytoplasm</keyword>
<keyword id="KW-0206">Cytoskeleton</keyword>
<keyword id="KW-0433">Leucine-rich repeat</keyword>
<keyword id="KW-0597">Phosphoprotein</keyword>
<keyword id="KW-1185">Reference proteome</keyword>
<keyword id="KW-0677">Repeat</keyword>
<evidence type="ECO:0000250" key="1"/>
<evidence type="ECO:0000250" key="2">
    <source>
        <dbReference type="UniProtKB" id="Q8IW35"/>
    </source>
</evidence>
<evidence type="ECO:0000255" key="3">
    <source>
        <dbReference type="PROSITE-ProRule" id="PRU00116"/>
    </source>
</evidence>
<evidence type="ECO:0000256" key="4">
    <source>
        <dbReference type="SAM" id="MobiDB-lite"/>
    </source>
</evidence>
<evidence type="ECO:0000269" key="5">
    <source>
    </source>
</evidence>
<evidence type="ECO:0000269" key="6">
    <source>
    </source>
</evidence>
<evidence type="ECO:0000303" key="7">
    <source>
    </source>
</evidence>
<evidence type="ECO:0000305" key="8"/>
<evidence type="ECO:0007744" key="9">
    <source>
    </source>
</evidence>
<accession>Q9CZ62</accession>
<accession>Q8BL35</accession>
<sequence length="856" mass="94641">MAVARVDGALAPGEGSVVNWSGQGLQKLGANLPCEADVHTLILDKNQIIKLENLEKCKQLIQLSVANNRLVRMMGVAKLTQLRVLNLPHNSIGCVEGLKDLVHLEWLNLAGNNLKTMEQVNSCTALQHLDLSDNNIPQIGDVSKLISLKTLLLHGNIITSLRMAPAYLPRNLSILSLAENEIRDLNEISFLASLSELEQLSIMNNPCVMATPSIPGFDYRPFIVSWCLNLRVLDGYVISQKESLKAEWLYSQGKGRSYRPGQHIQLVQYLATVCPLTSALGLQTAEDAKLEKILSKQRFHQRQLMSQSQDEELSPLAAVETRVHRTPECSSPGQDFQESEPVLQINSWVGISSNDDQLYAVKNNFPAAAHAARYSRNDLHLEDIQTDEDKLNCSLLSSESTFMPVASGLSPVSPTVELRLQGINLGLEDDDGADEFTKGLENQDEDKDKEKSLWDMSESCVEMLKRKISTEVSEAAGLLPCPKSVIISAALKEDTHSLTSLPESAGHSASRTEANSEEAMSPATSEKFPCRILTQRPAALGQDKVTLQKLNAAATKLQACWRGFYTRNYNQQAKGVRYEIRLRRMQEHIVCLTDEVRRLRKERDEERVKTFVQEEAVRFLWNEVRSVQAWQQTVEQRLASWPPDVPPISSTLASPKPPLFPHHQDPSSDQSSDWLVAEDEAAQGRSAPDFPDSGFHSSLTEQVPCLQDSLDFEKSSVESSENSVLGNSADTVKCVKDRDSEATAEEHSDCSRESSASEQDNTLLQQYLTSVQQLDDAAEAADSDDVAGDGKRHLACSPERFDASSDSETHRVASTSQDEISQTPENCQLNEEAQGQPPECDPAFQGLHVGVTVQPV</sequence>
<name>CEP97_MOUSE</name>
<comment type="function">
    <text evidence="2">Acts as a key negative regulator of ciliogenesis in collaboration with CCP110 by capping the mother centriole thereby preventing cilia formation. Required for recruitment of CCP110 to the centrosome (By similarity).</text>
</comment>
<comment type="subunit">
    <text evidence="2 6">Interacts with CALM1, CEP76, KIF24 and TALPID3 (By similarity). Interacts with CCP110 (PubMed:35301795). ENKD1 competes with CEP97 for binding to CCP110, destabilizing the interaction between CP110 and CEP97 which promotes the removal of CCP110 and CEP97 from the mother centriole and allows the initiation of ciliogenesis (PubMed:35301795). Via its interaction with CCP110, may indirectly interact with HERC2 and NEURL4 (By similarity). Interacts with MPHOSPH9 (By similarity).</text>
</comment>
<comment type="subcellular location">
    <subcellularLocation>
        <location evidence="5">Cytoplasm</location>
        <location evidence="5">Cytoskeleton</location>
        <location evidence="5">Microtubule organizing center</location>
        <location evidence="5">Centrosome</location>
    </subcellularLocation>
    <subcellularLocation>
        <location evidence="2">Cytoplasm</location>
        <location evidence="2">Cytoskeleton</location>
        <location evidence="2">Microtubule organizing center</location>
        <location evidence="2">Centrosome</location>
        <location evidence="2">Centriole</location>
    </subcellularLocation>
    <text evidence="2">Recruited at the distal end of the mother centriole by MPHOSPH9.</text>
</comment>
<comment type="alternative products">
    <event type="alternative splicing"/>
    <isoform>
        <id>Q9CZ62-1</id>
        <name>1</name>
        <sequence type="displayed"/>
    </isoform>
    <isoform>
        <id>Q9CZ62-2</id>
        <name>2</name>
        <sequence type="described" ref="VSP_021883"/>
    </isoform>
</comment>
<comment type="sequence caution" evidence="8">
    <conflict type="frameshift">
        <sequence resource="EMBL-CDS" id="BAC32752"/>
    </conflict>
</comment>
<organism>
    <name type="scientific">Mus musculus</name>
    <name type="common">Mouse</name>
    <dbReference type="NCBI Taxonomy" id="10090"/>
    <lineage>
        <taxon>Eukaryota</taxon>
        <taxon>Metazoa</taxon>
        <taxon>Chordata</taxon>
        <taxon>Craniata</taxon>
        <taxon>Vertebrata</taxon>
        <taxon>Euteleostomi</taxon>
        <taxon>Mammalia</taxon>
        <taxon>Eutheria</taxon>
        <taxon>Euarchontoglires</taxon>
        <taxon>Glires</taxon>
        <taxon>Rodentia</taxon>
        <taxon>Myomorpha</taxon>
        <taxon>Muroidea</taxon>
        <taxon>Muridae</taxon>
        <taxon>Murinae</taxon>
        <taxon>Mus</taxon>
        <taxon>Mus</taxon>
    </lineage>
</organism>
<gene>
    <name type="primary">Cep97</name>
    <name type="synonym">Lrriq2</name>
</gene>
<proteinExistence type="evidence at protein level"/>
<feature type="chain" id="PRO_0000263706" description="Centrosomal protein of 97 kDa">
    <location>
        <begin position="1"/>
        <end position="856"/>
    </location>
</feature>
<feature type="repeat" description="LRR 1">
    <location>
        <begin position="37"/>
        <end position="58"/>
    </location>
</feature>
<feature type="repeat" description="LRR 2">
    <location>
        <begin position="59"/>
        <end position="80"/>
    </location>
</feature>
<feature type="repeat" description="LRR 3">
    <location>
        <begin position="81"/>
        <end position="102"/>
    </location>
</feature>
<feature type="repeat" description="LRR 4">
    <location>
        <begin position="103"/>
        <end position="124"/>
    </location>
</feature>
<feature type="repeat" description="LRR 5">
    <location>
        <begin position="125"/>
        <end position="146"/>
    </location>
</feature>
<feature type="repeat" description="LRR 6">
    <location>
        <begin position="147"/>
        <end position="168"/>
    </location>
</feature>
<feature type="repeat" description="LRR 7">
    <location>
        <begin position="171"/>
        <end position="192"/>
    </location>
</feature>
<feature type="repeat" description="LRR 8">
    <location>
        <begin position="196"/>
        <end position="205"/>
    </location>
</feature>
<feature type="domain" description="LRRCT">
    <location>
        <begin position="211"/>
        <end position="249"/>
    </location>
</feature>
<feature type="domain" description="IQ" evidence="3">
    <location>
        <begin position="550"/>
        <end position="579"/>
    </location>
</feature>
<feature type="region of interest" description="CCP110-binding" evidence="1">
    <location>
        <begin position="300"/>
        <end position="742"/>
    </location>
</feature>
<feature type="region of interest" description="Disordered" evidence="4">
    <location>
        <begin position="430"/>
        <end position="451"/>
    </location>
</feature>
<feature type="region of interest" description="Disordered" evidence="4">
    <location>
        <begin position="498"/>
        <end position="525"/>
    </location>
</feature>
<feature type="region of interest" description="Interaction with MPHOSPH9" evidence="2">
    <location>
        <begin position="579"/>
        <end position="853"/>
    </location>
</feature>
<feature type="region of interest" description="Disordered" evidence="4">
    <location>
        <begin position="646"/>
        <end position="672"/>
    </location>
</feature>
<feature type="region of interest" description="Disordered" evidence="4">
    <location>
        <begin position="737"/>
        <end position="840"/>
    </location>
</feature>
<feature type="compositionally biased region" description="Polar residues" evidence="4">
    <location>
        <begin position="498"/>
        <end position="513"/>
    </location>
</feature>
<feature type="compositionally biased region" description="Basic and acidic residues" evidence="4">
    <location>
        <begin position="737"/>
        <end position="752"/>
    </location>
</feature>
<feature type="compositionally biased region" description="Polar residues" evidence="4">
    <location>
        <begin position="753"/>
        <end position="773"/>
    </location>
</feature>
<feature type="compositionally biased region" description="Acidic residues" evidence="4">
    <location>
        <begin position="776"/>
        <end position="787"/>
    </location>
</feature>
<feature type="compositionally biased region" description="Basic and acidic residues" evidence="4">
    <location>
        <begin position="799"/>
        <end position="811"/>
    </location>
</feature>
<feature type="compositionally biased region" description="Polar residues" evidence="4">
    <location>
        <begin position="812"/>
        <end position="833"/>
    </location>
</feature>
<feature type="modified residue" description="Phosphoserine" evidence="2">
    <location>
        <position position="308"/>
    </location>
</feature>
<feature type="modified residue" description="Phosphoserine" evidence="2">
    <location>
        <position position="410"/>
    </location>
</feature>
<feature type="modified residue" description="Phosphoserine" evidence="2">
    <location>
        <position position="497"/>
    </location>
</feature>
<feature type="modified residue" description="Phosphoserine" evidence="9">
    <location>
        <position position="521"/>
    </location>
</feature>
<feature type="modified residue" description="Phosphothreonine" evidence="2">
    <location>
        <position position="534"/>
    </location>
</feature>
<feature type="modified residue" description="Phosphoserine" evidence="2">
    <location>
        <position position="755"/>
    </location>
</feature>
<feature type="splice variant" id="VSP_021883" description="In isoform 2." evidence="7">
    <location>
        <begin position="1"/>
        <end position="72"/>
    </location>
</feature>
<reference key="1">
    <citation type="journal article" date="2005" name="Science">
        <title>The transcriptional landscape of the mammalian genome.</title>
        <authorList>
            <person name="Carninci P."/>
            <person name="Kasukawa T."/>
            <person name="Katayama S."/>
            <person name="Gough J."/>
            <person name="Frith M.C."/>
            <person name="Maeda N."/>
            <person name="Oyama R."/>
            <person name="Ravasi T."/>
            <person name="Lenhard B."/>
            <person name="Wells C."/>
            <person name="Kodzius R."/>
            <person name="Shimokawa K."/>
            <person name="Bajic V.B."/>
            <person name="Brenner S.E."/>
            <person name="Batalov S."/>
            <person name="Forrest A.R."/>
            <person name="Zavolan M."/>
            <person name="Davis M.J."/>
            <person name="Wilming L.G."/>
            <person name="Aidinis V."/>
            <person name="Allen J.E."/>
            <person name="Ambesi-Impiombato A."/>
            <person name="Apweiler R."/>
            <person name="Aturaliya R.N."/>
            <person name="Bailey T.L."/>
            <person name="Bansal M."/>
            <person name="Baxter L."/>
            <person name="Beisel K.W."/>
            <person name="Bersano T."/>
            <person name="Bono H."/>
            <person name="Chalk A.M."/>
            <person name="Chiu K.P."/>
            <person name="Choudhary V."/>
            <person name="Christoffels A."/>
            <person name="Clutterbuck D.R."/>
            <person name="Crowe M.L."/>
            <person name="Dalla E."/>
            <person name="Dalrymple B.P."/>
            <person name="de Bono B."/>
            <person name="Della Gatta G."/>
            <person name="di Bernardo D."/>
            <person name="Down T."/>
            <person name="Engstrom P."/>
            <person name="Fagiolini M."/>
            <person name="Faulkner G."/>
            <person name="Fletcher C.F."/>
            <person name="Fukushima T."/>
            <person name="Furuno M."/>
            <person name="Futaki S."/>
            <person name="Gariboldi M."/>
            <person name="Georgii-Hemming P."/>
            <person name="Gingeras T.R."/>
            <person name="Gojobori T."/>
            <person name="Green R.E."/>
            <person name="Gustincich S."/>
            <person name="Harbers M."/>
            <person name="Hayashi Y."/>
            <person name="Hensch T.K."/>
            <person name="Hirokawa N."/>
            <person name="Hill D."/>
            <person name="Huminiecki L."/>
            <person name="Iacono M."/>
            <person name="Ikeo K."/>
            <person name="Iwama A."/>
            <person name="Ishikawa T."/>
            <person name="Jakt M."/>
            <person name="Kanapin A."/>
            <person name="Katoh M."/>
            <person name="Kawasawa Y."/>
            <person name="Kelso J."/>
            <person name="Kitamura H."/>
            <person name="Kitano H."/>
            <person name="Kollias G."/>
            <person name="Krishnan S.P."/>
            <person name="Kruger A."/>
            <person name="Kummerfeld S.K."/>
            <person name="Kurochkin I.V."/>
            <person name="Lareau L.F."/>
            <person name="Lazarevic D."/>
            <person name="Lipovich L."/>
            <person name="Liu J."/>
            <person name="Liuni S."/>
            <person name="McWilliam S."/>
            <person name="Madan Babu M."/>
            <person name="Madera M."/>
            <person name="Marchionni L."/>
            <person name="Matsuda H."/>
            <person name="Matsuzawa S."/>
            <person name="Miki H."/>
            <person name="Mignone F."/>
            <person name="Miyake S."/>
            <person name="Morris K."/>
            <person name="Mottagui-Tabar S."/>
            <person name="Mulder N."/>
            <person name="Nakano N."/>
            <person name="Nakauchi H."/>
            <person name="Ng P."/>
            <person name="Nilsson R."/>
            <person name="Nishiguchi S."/>
            <person name="Nishikawa S."/>
            <person name="Nori F."/>
            <person name="Ohara O."/>
            <person name="Okazaki Y."/>
            <person name="Orlando V."/>
            <person name="Pang K.C."/>
            <person name="Pavan W.J."/>
            <person name="Pavesi G."/>
            <person name="Pesole G."/>
            <person name="Petrovsky N."/>
            <person name="Piazza S."/>
            <person name="Reed J."/>
            <person name="Reid J.F."/>
            <person name="Ring B.Z."/>
            <person name="Ringwald M."/>
            <person name="Rost B."/>
            <person name="Ruan Y."/>
            <person name="Salzberg S.L."/>
            <person name="Sandelin A."/>
            <person name="Schneider C."/>
            <person name="Schoenbach C."/>
            <person name="Sekiguchi K."/>
            <person name="Semple C.A."/>
            <person name="Seno S."/>
            <person name="Sessa L."/>
            <person name="Sheng Y."/>
            <person name="Shibata Y."/>
            <person name="Shimada H."/>
            <person name="Shimada K."/>
            <person name="Silva D."/>
            <person name="Sinclair B."/>
            <person name="Sperling S."/>
            <person name="Stupka E."/>
            <person name="Sugiura K."/>
            <person name="Sultana R."/>
            <person name="Takenaka Y."/>
            <person name="Taki K."/>
            <person name="Tammoja K."/>
            <person name="Tan S.L."/>
            <person name="Tang S."/>
            <person name="Taylor M.S."/>
            <person name="Tegner J."/>
            <person name="Teichmann S.A."/>
            <person name="Ueda H.R."/>
            <person name="van Nimwegen E."/>
            <person name="Verardo R."/>
            <person name="Wei C.L."/>
            <person name="Yagi K."/>
            <person name="Yamanishi H."/>
            <person name="Zabarovsky E."/>
            <person name="Zhu S."/>
            <person name="Zimmer A."/>
            <person name="Hide W."/>
            <person name="Bult C."/>
            <person name="Grimmond S.M."/>
            <person name="Teasdale R.D."/>
            <person name="Liu E.T."/>
            <person name="Brusic V."/>
            <person name="Quackenbush J."/>
            <person name="Wahlestedt C."/>
            <person name="Mattick J.S."/>
            <person name="Hume D.A."/>
            <person name="Kai C."/>
            <person name="Sasaki D."/>
            <person name="Tomaru Y."/>
            <person name="Fukuda S."/>
            <person name="Kanamori-Katayama M."/>
            <person name="Suzuki M."/>
            <person name="Aoki J."/>
            <person name="Arakawa T."/>
            <person name="Iida J."/>
            <person name="Imamura K."/>
            <person name="Itoh M."/>
            <person name="Kato T."/>
            <person name="Kawaji H."/>
            <person name="Kawagashira N."/>
            <person name="Kawashima T."/>
            <person name="Kojima M."/>
            <person name="Kondo S."/>
            <person name="Konno H."/>
            <person name="Nakano K."/>
            <person name="Ninomiya N."/>
            <person name="Nishio T."/>
            <person name="Okada M."/>
            <person name="Plessy C."/>
            <person name="Shibata K."/>
            <person name="Shiraki T."/>
            <person name="Suzuki S."/>
            <person name="Tagami M."/>
            <person name="Waki K."/>
            <person name="Watahiki A."/>
            <person name="Okamura-Oho Y."/>
            <person name="Suzuki H."/>
            <person name="Kawai J."/>
            <person name="Hayashizaki Y."/>
        </authorList>
    </citation>
    <scope>NUCLEOTIDE SEQUENCE [LARGE SCALE MRNA] (ISOFORMS 1 AND 2)</scope>
    <source>
        <strain>C57BL/6J</strain>
        <strain>NOD</strain>
        <tissue>Corpora quadrigemina</tissue>
    </source>
</reference>
<reference key="2">
    <citation type="journal article" date="2004" name="Genome Res.">
        <title>The status, quality, and expansion of the NIH full-length cDNA project: the Mammalian Gene Collection (MGC).</title>
        <authorList>
            <consortium name="The MGC Project Team"/>
        </authorList>
    </citation>
    <scope>NUCLEOTIDE SEQUENCE [LARGE SCALE MRNA] (ISOFORM 1)</scope>
    <source>
        <strain>C57BL/6J</strain>
        <tissue>Brain</tissue>
    </source>
</reference>
<reference key="3">
    <citation type="journal article" date="2010" name="Cell">
        <title>A tissue-specific atlas of mouse protein phosphorylation and expression.</title>
        <authorList>
            <person name="Huttlin E.L."/>
            <person name="Jedrychowski M.P."/>
            <person name="Elias J.E."/>
            <person name="Goswami T."/>
            <person name="Rad R."/>
            <person name="Beausoleil S.A."/>
            <person name="Villen J."/>
            <person name="Haas W."/>
            <person name="Sowa M.E."/>
            <person name="Gygi S.P."/>
        </authorList>
    </citation>
    <scope>PHOSPHORYLATION [LARGE SCALE ANALYSIS] AT SER-521</scope>
    <scope>IDENTIFICATION BY MASS SPECTROMETRY [LARGE SCALE ANALYSIS]</scope>
    <source>
        <tissue>Lung</tissue>
        <tissue>Testis</tissue>
    </source>
</reference>
<reference key="4">
    <citation type="journal article" date="2018" name="Nat. Commun.">
        <title>M-Phase Phosphoprotein 9 regulates ciliogenesis by modulating CP110-CEP97 complex localization at the mother centriole.</title>
        <authorList>
            <person name="Huang N."/>
            <person name="Zhang D."/>
            <person name="Li F."/>
            <person name="Chai P."/>
            <person name="Wang S."/>
            <person name="Teng J."/>
            <person name="Chen J."/>
        </authorList>
    </citation>
    <scope>SUBCELLULAR LOCATION</scope>
</reference>
<reference key="5">
    <citation type="journal article" date="2022" name="EMBO Rep.">
        <title>ENKD1 promotes CP110 removal through competing with CEP97 to initiate ciliogenesis.</title>
        <authorList>
            <person name="Song T."/>
            <person name="Yang Y."/>
            <person name="Zhou P."/>
            <person name="Ran J."/>
            <person name="Zhang L."/>
            <person name="Wu X."/>
            <person name="Xie W."/>
            <person name="Zhong T."/>
            <person name="Liu H."/>
            <person name="Liu M."/>
            <person name="Li D."/>
            <person name="Zhao H."/>
            <person name="Zhou J."/>
        </authorList>
    </citation>
    <scope>INTERACTION WITH CCP110</scope>
</reference>
<dbReference type="EMBL" id="AK012971">
    <property type="protein sequence ID" value="BAB28575.1"/>
    <property type="molecule type" value="mRNA"/>
</dbReference>
<dbReference type="EMBL" id="AK046486">
    <property type="protein sequence ID" value="BAC32752.1"/>
    <property type="status" value="ALT_FRAME"/>
    <property type="molecule type" value="mRNA"/>
</dbReference>
<dbReference type="EMBL" id="AK154885">
    <property type="protein sequence ID" value="BAE32902.1"/>
    <property type="molecule type" value="mRNA"/>
</dbReference>
<dbReference type="EMBL" id="BC067049">
    <property type="protein sequence ID" value="AAH67049.1"/>
    <property type="molecule type" value="mRNA"/>
</dbReference>
<dbReference type="CCDS" id="CCDS28217.1">
    <molecule id="Q9CZ62-1"/>
</dbReference>
<dbReference type="RefSeq" id="NP_001152836.1">
    <property type="nucleotide sequence ID" value="NM_001159364.1"/>
</dbReference>
<dbReference type="RefSeq" id="NP_001152837.1">
    <property type="nucleotide sequence ID" value="NM_001159365.1"/>
</dbReference>
<dbReference type="RefSeq" id="NP_001152838.1">
    <property type="nucleotide sequence ID" value="NM_001159366.1"/>
</dbReference>
<dbReference type="RefSeq" id="NP_083091.1">
    <molecule id="Q9CZ62-1"/>
    <property type="nucleotide sequence ID" value="NM_028815.4"/>
</dbReference>
<dbReference type="SMR" id="Q9CZ62"/>
<dbReference type="BioGRID" id="216572">
    <property type="interactions" value="2"/>
</dbReference>
<dbReference type="FunCoup" id="Q9CZ62">
    <property type="interactions" value="1221"/>
</dbReference>
<dbReference type="IntAct" id="Q9CZ62">
    <property type="interactions" value="3"/>
</dbReference>
<dbReference type="MINT" id="Q9CZ62"/>
<dbReference type="STRING" id="10090.ENSMUSP00000023270"/>
<dbReference type="GlyGen" id="Q9CZ62">
    <property type="glycosylation" value="1 site"/>
</dbReference>
<dbReference type="iPTMnet" id="Q9CZ62"/>
<dbReference type="PhosphoSitePlus" id="Q9CZ62"/>
<dbReference type="jPOST" id="Q9CZ62"/>
<dbReference type="PaxDb" id="10090-ENSMUSP00000023270"/>
<dbReference type="PeptideAtlas" id="Q9CZ62"/>
<dbReference type="ProteomicsDB" id="280006">
    <molecule id="Q9CZ62-1"/>
</dbReference>
<dbReference type="ProteomicsDB" id="280007">
    <molecule id="Q9CZ62-2"/>
</dbReference>
<dbReference type="Pumba" id="Q9CZ62"/>
<dbReference type="Antibodypedia" id="15955">
    <property type="antibodies" value="162 antibodies from 25 providers"/>
</dbReference>
<dbReference type="DNASU" id="74201"/>
<dbReference type="Ensembl" id="ENSMUST00000023270.14">
    <molecule id="Q9CZ62-1"/>
    <property type="protein sequence ID" value="ENSMUSP00000023270.8"/>
    <property type="gene ID" value="ENSMUSG00000022604.19"/>
</dbReference>
<dbReference type="Ensembl" id="ENSMUST00000117468.8">
    <molecule id="Q9CZ62-2"/>
    <property type="protein sequence ID" value="ENSMUSP00000112687.2"/>
    <property type="gene ID" value="ENSMUSG00000022604.19"/>
</dbReference>
<dbReference type="Ensembl" id="ENSMUST00000118500.8">
    <molecule id="Q9CZ62-2"/>
    <property type="protein sequence ID" value="ENSMUSP00000112663.2"/>
    <property type="gene ID" value="ENSMUSG00000022604.19"/>
</dbReference>
<dbReference type="GeneID" id="74201"/>
<dbReference type="KEGG" id="mmu:74201"/>
<dbReference type="UCSC" id="uc007zlr.2">
    <molecule id="Q9CZ62-1"/>
    <property type="organism name" value="mouse"/>
</dbReference>
<dbReference type="AGR" id="MGI:1921451"/>
<dbReference type="CTD" id="79598"/>
<dbReference type="MGI" id="MGI:1921451">
    <property type="gene designation" value="Cep97"/>
</dbReference>
<dbReference type="VEuPathDB" id="HostDB:ENSMUSG00000022604"/>
<dbReference type="eggNOG" id="KOG0531">
    <property type="taxonomic scope" value="Eukaryota"/>
</dbReference>
<dbReference type="GeneTree" id="ENSGT00910000144283"/>
<dbReference type="HOGENOM" id="CLU_016381_0_0_1"/>
<dbReference type="InParanoid" id="Q9CZ62"/>
<dbReference type="OMA" id="AYWRGFY"/>
<dbReference type="OrthoDB" id="5954088at2759"/>
<dbReference type="PhylomeDB" id="Q9CZ62"/>
<dbReference type="TreeFam" id="TF320816"/>
<dbReference type="Reactome" id="R-MMU-5620912">
    <property type="pathway name" value="Anchoring of the basal body to the plasma membrane"/>
</dbReference>
<dbReference type="Reactome" id="R-MMU-9013424">
    <property type="pathway name" value="RHOV GTPase cycle"/>
</dbReference>
<dbReference type="BioGRID-ORCS" id="74201">
    <property type="hits" value="5 hits in 75 CRISPR screens"/>
</dbReference>
<dbReference type="ChiTaRS" id="Cep97">
    <property type="organism name" value="mouse"/>
</dbReference>
<dbReference type="PRO" id="PR:Q9CZ62"/>
<dbReference type="Proteomes" id="UP000000589">
    <property type="component" value="Chromosome 16"/>
</dbReference>
<dbReference type="RNAct" id="Q9CZ62">
    <property type="molecule type" value="protein"/>
</dbReference>
<dbReference type="Bgee" id="ENSMUSG00000022604">
    <property type="expression patterns" value="Expressed in rostral migratory stream and 228 other cell types or tissues"/>
</dbReference>
<dbReference type="ExpressionAtlas" id="Q9CZ62">
    <property type="expression patterns" value="baseline and differential"/>
</dbReference>
<dbReference type="GO" id="GO:0005814">
    <property type="term" value="C:centriole"/>
    <property type="evidence" value="ECO:0007669"/>
    <property type="project" value="UniProtKB-SubCell"/>
</dbReference>
<dbReference type="GO" id="GO:0005813">
    <property type="term" value="C:centrosome"/>
    <property type="evidence" value="ECO:0000314"/>
    <property type="project" value="UniProtKB"/>
</dbReference>
<dbReference type="GO" id="GO:0005737">
    <property type="term" value="C:cytoplasm"/>
    <property type="evidence" value="ECO:0007669"/>
    <property type="project" value="UniProtKB-KW"/>
</dbReference>
<dbReference type="GO" id="GO:0032991">
    <property type="term" value="C:protein-containing complex"/>
    <property type="evidence" value="ECO:0000266"/>
    <property type="project" value="MGI"/>
</dbReference>
<dbReference type="GO" id="GO:0030030">
    <property type="term" value="P:cell projection organization"/>
    <property type="evidence" value="ECO:0007669"/>
    <property type="project" value="UniProtKB-KW"/>
</dbReference>
<dbReference type="GO" id="GO:1902018">
    <property type="term" value="P:negative regulation of cilium assembly"/>
    <property type="evidence" value="ECO:0000314"/>
    <property type="project" value="UniProtKB"/>
</dbReference>
<dbReference type="GO" id="GO:1901673">
    <property type="term" value="P:regulation of mitotic spindle assembly"/>
    <property type="evidence" value="ECO:0007669"/>
    <property type="project" value="Ensembl"/>
</dbReference>
<dbReference type="CDD" id="cd23767">
    <property type="entry name" value="IQCD"/>
    <property type="match status" value="1"/>
</dbReference>
<dbReference type="FunFam" id="3.80.10.10:FF:000165">
    <property type="entry name" value="Centrosomal protein of 97 kDa"/>
    <property type="match status" value="1"/>
</dbReference>
<dbReference type="FunFam" id="3.80.10.10:FF:000199">
    <property type="entry name" value="centrosomal protein of 97 kDa"/>
    <property type="match status" value="1"/>
</dbReference>
<dbReference type="Gene3D" id="3.80.10.10">
    <property type="entry name" value="Ribonuclease Inhibitor"/>
    <property type="match status" value="2"/>
</dbReference>
<dbReference type="InterPro" id="IPR050576">
    <property type="entry name" value="Cilia_flagella_integrity"/>
</dbReference>
<dbReference type="InterPro" id="IPR001611">
    <property type="entry name" value="Leu-rich_rpt"/>
</dbReference>
<dbReference type="InterPro" id="IPR032675">
    <property type="entry name" value="LRR_dom_sf"/>
</dbReference>
<dbReference type="PANTHER" id="PTHR45973:SF2">
    <property type="entry name" value="CENTROSOMAL PROTEIN OF 97 KDA"/>
    <property type="match status" value="1"/>
</dbReference>
<dbReference type="PANTHER" id="PTHR45973">
    <property type="entry name" value="PROTEIN PHOSPHATASE 1 REGULATORY SUBUNIT SDS22-RELATED"/>
    <property type="match status" value="1"/>
</dbReference>
<dbReference type="Pfam" id="PF14580">
    <property type="entry name" value="LRR_9"/>
    <property type="match status" value="1"/>
</dbReference>
<dbReference type="SMART" id="SM00365">
    <property type="entry name" value="LRR_SD22"/>
    <property type="match status" value="5"/>
</dbReference>
<dbReference type="SUPFAM" id="SSF52058">
    <property type="entry name" value="L domain-like"/>
    <property type="match status" value="1"/>
</dbReference>
<dbReference type="PROSITE" id="PS50096">
    <property type="entry name" value="IQ"/>
    <property type="match status" value="1"/>
</dbReference>
<dbReference type="PROSITE" id="PS51450">
    <property type="entry name" value="LRR"/>
    <property type="match status" value="7"/>
</dbReference>